<organism>
    <name type="scientific">Mycobacterium ulcerans (strain Agy99)</name>
    <dbReference type="NCBI Taxonomy" id="362242"/>
    <lineage>
        <taxon>Bacteria</taxon>
        <taxon>Bacillati</taxon>
        <taxon>Actinomycetota</taxon>
        <taxon>Actinomycetes</taxon>
        <taxon>Mycobacteriales</taxon>
        <taxon>Mycobacteriaceae</taxon>
        <taxon>Mycobacterium</taxon>
        <taxon>Mycobacterium ulcerans group</taxon>
    </lineage>
</organism>
<name>ATPB_MYCUA</name>
<dbReference type="EC" id="7.1.2.2" evidence="1"/>
<dbReference type="EMBL" id="CP000325">
    <property type="protein sequence ID" value="ABL06019.1"/>
    <property type="molecule type" value="Genomic_DNA"/>
</dbReference>
<dbReference type="RefSeq" id="WP_011741624.1">
    <property type="nucleotide sequence ID" value="NC_008611.1"/>
</dbReference>
<dbReference type="SMR" id="A0PUK0"/>
<dbReference type="GeneID" id="34341448"/>
<dbReference type="KEGG" id="mul:MUL_3954"/>
<dbReference type="eggNOG" id="COG0055">
    <property type="taxonomic scope" value="Bacteria"/>
</dbReference>
<dbReference type="HOGENOM" id="CLU_022398_0_2_11"/>
<dbReference type="Proteomes" id="UP000000765">
    <property type="component" value="Chromosome"/>
</dbReference>
<dbReference type="GO" id="GO:0005886">
    <property type="term" value="C:plasma membrane"/>
    <property type="evidence" value="ECO:0007669"/>
    <property type="project" value="UniProtKB-SubCell"/>
</dbReference>
<dbReference type="GO" id="GO:0045259">
    <property type="term" value="C:proton-transporting ATP synthase complex"/>
    <property type="evidence" value="ECO:0007669"/>
    <property type="project" value="UniProtKB-KW"/>
</dbReference>
<dbReference type="GO" id="GO:0005524">
    <property type="term" value="F:ATP binding"/>
    <property type="evidence" value="ECO:0007669"/>
    <property type="project" value="UniProtKB-UniRule"/>
</dbReference>
<dbReference type="GO" id="GO:0016887">
    <property type="term" value="F:ATP hydrolysis activity"/>
    <property type="evidence" value="ECO:0007669"/>
    <property type="project" value="InterPro"/>
</dbReference>
<dbReference type="GO" id="GO:0046933">
    <property type="term" value="F:proton-transporting ATP synthase activity, rotational mechanism"/>
    <property type="evidence" value="ECO:0007669"/>
    <property type="project" value="UniProtKB-UniRule"/>
</dbReference>
<dbReference type="CDD" id="cd18110">
    <property type="entry name" value="ATP-synt_F1_beta_C"/>
    <property type="match status" value="1"/>
</dbReference>
<dbReference type="CDD" id="cd18115">
    <property type="entry name" value="ATP-synt_F1_beta_N"/>
    <property type="match status" value="1"/>
</dbReference>
<dbReference type="CDD" id="cd01133">
    <property type="entry name" value="F1-ATPase_beta_CD"/>
    <property type="match status" value="1"/>
</dbReference>
<dbReference type="FunFam" id="1.10.1140.10:FF:000001">
    <property type="entry name" value="ATP synthase subunit beta"/>
    <property type="match status" value="1"/>
</dbReference>
<dbReference type="FunFam" id="2.40.10.170:FF:000005">
    <property type="entry name" value="ATP synthase subunit beta"/>
    <property type="match status" value="1"/>
</dbReference>
<dbReference type="FunFam" id="3.40.50.300:FF:000004">
    <property type="entry name" value="ATP synthase subunit beta"/>
    <property type="match status" value="1"/>
</dbReference>
<dbReference type="Gene3D" id="2.40.10.170">
    <property type="match status" value="1"/>
</dbReference>
<dbReference type="Gene3D" id="1.10.1140.10">
    <property type="entry name" value="Bovine Mitochondrial F1-atpase, Atp Synthase Beta Chain, Chain D, domain 3"/>
    <property type="match status" value="1"/>
</dbReference>
<dbReference type="Gene3D" id="3.40.50.300">
    <property type="entry name" value="P-loop containing nucleotide triphosphate hydrolases"/>
    <property type="match status" value="1"/>
</dbReference>
<dbReference type="HAMAP" id="MF_01347">
    <property type="entry name" value="ATP_synth_beta_bact"/>
    <property type="match status" value="1"/>
</dbReference>
<dbReference type="InterPro" id="IPR003593">
    <property type="entry name" value="AAA+_ATPase"/>
</dbReference>
<dbReference type="InterPro" id="IPR055190">
    <property type="entry name" value="ATP-synt_VA_C"/>
</dbReference>
<dbReference type="InterPro" id="IPR005722">
    <property type="entry name" value="ATP_synth_F1_bsu"/>
</dbReference>
<dbReference type="InterPro" id="IPR020003">
    <property type="entry name" value="ATPase_a/bsu_AS"/>
</dbReference>
<dbReference type="InterPro" id="IPR050053">
    <property type="entry name" value="ATPase_alpha/beta_chains"/>
</dbReference>
<dbReference type="InterPro" id="IPR004100">
    <property type="entry name" value="ATPase_F1/V1/A1_a/bsu_N"/>
</dbReference>
<dbReference type="InterPro" id="IPR036121">
    <property type="entry name" value="ATPase_F1/V1/A1_a/bsu_N_sf"/>
</dbReference>
<dbReference type="InterPro" id="IPR000194">
    <property type="entry name" value="ATPase_F1/V1/A1_a/bsu_nucl-bd"/>
</dbReference>
<dbReference type="InterPro" id="IPR024034">
    <property type="entry name" value="ATPase_F1/V1_b/a_C"/>
</dbReference>
<dbReference type="InterPro" id="IPR027417">
    <property type="entry name" value="P-loop_NTPase"/>
</dbReference>
<dbReference type="NCBIfam" id="TIGR01039">
    <property type="entry name" value="atpD"/>
    <property type="match status" value="1"/>
</dbReference>
<dbReference type="PANTHER" id="PTHR15184">
    <property type="entry name" value="ATP SYNTHASE"/>
    <property type="match status" value="1"/>
</dbReference>
<dbReference type="PANTHER" id="PTHR15184:SF71">
    <property type="entry name" value="ATP SYNTHASE SUBUNIT BETA, MITOCHONDRIAL"/>
    <property type="match status" value="1"/>
</dbReference>
<dbReference type="Pfam" id="PF00006">
    <property type="entry name" value="ATP-synt_ab"/>
    <property type="match status" value="1"/>
</dbReference>
<dbReference type="Pfam" id="PF02874">
    <property type="entry name" value="ATP-synt_ab_N"/>
    <property type="match status" value="1"/>
</dbReference>
<dbReference type="Pfam" id="PF22919">
    <property type="entry name" value="ATP-synt_VA_C"/>
    <property type="match status" value="1"/>
</dbReference>
<dbReference type="SMART" id="SM00382">
    <property type="entry name" value="AAA"/>
    <property type="match status" value="1"/>
</dbReference>
<dbReference type="SUPFAM" id="SSF47917">
    <property type="entry name" value="C-terminal domain of alpha and beta subunits of F1 ATP synthase"/>
    <property type="match status" value="1"/>
</dbReference>
<dbReference type="SUPFAM" id="SSF50615">
    <property type="entry name" value="N-terminal domain of alpha and beta subunits of F1 ATP synthase"/>
    <property type="match status" value="1"/>
</dbReference>
<dbReference type="SUPFAM" id="SSF52540">
    <property type="entry name" value="P-loop containing nucleoside triphosphate hydrolases"/>
    <property type="match status" value="1"/>
</dbReference>
<dbReference type="PROSITE" id="PS00152">
    <property type="entry name" value="ATPASE_ALPHA_BETA"/>
    <property type="match status" value="1"/>
</dbReference>
<protein>
    <recommendedName>
        <fullName evidence="1">ATP synthase subunit beta</fullName>
        <ecNumber evidence="1">7.1.2.2</ecNumber>
    </recommendedName>
    <alternativeName>
        <fullName evidence="1">ATP synthase F1 sector subunit beta</fullName>
    </alternativeName>
    <alternativeName>
        <fullName evidence="1">F-ATPase subunit beta</fullName>
    </alternativeName>
</protein>
<comment type="function">
    <text evidence="1">Produces ATP from ADP in the presence of a proton gradient across the membrane. The catalytic sites are hosted primarily by the beta subunits.</text>
</comment>
<comment type="catalytic activity">
    <reaction evidence="1">
        <text>ATP + H2O + 4 H(+)(in) = ADP + phosphate + 5 H(+)(out)</text>
        <dbReference type="Rhea" id="RHEA:57720"/>
        <dbReference type="ChEBI" id="CHEBI:15377"/>
        <dbReference type="ChEBI" id="CHEBI:15378"/>
        <dbReference type="ChEBI" id="CHEBI:30616"/>
        <dbReference type="ChEBI" id="CHEBI:43474"/>
        <dbReference type="ChEBI" id="CHEBI:456216"/>
        <dbReference type="EC" id="7.1.2.2"/>
    </reaction>
</comment>
<comment type="subunit">
    <text evidence="1">F-type ATPases have 2 components, CF(1) - the catalytic core - and CF(0) - the membrane proton channel. CF(1) has five subunits: alpha(3), beta(3), gamma(1), delta(1), epsilon(1). CF(0) has three main subunits: a(1), b(2) and c(9-12). The alpha and beta chains form an alternating ring which encloses part of the gamma chain. CF(1) is attached to CF(0) by a central stalk formed by the gamma and epsilon chains, while a peripheral stalk is formed by the delta and b chains.</text>
</comment>
<comment type="subcellular location">
    <subcellularLocation>
        <location evidence="1">Cell membrane</location>
        <topology evidence="1">Peripheral membrane protein</topology>
    </subcellularLocation>
</comment>
<comment type="similarity">
    <text evidence="1">Belongs to the ATPase alpha/beta chains family.</text>
</comment>
<gene>
    <name evidence="1" type="primary">atpD</name>
    <name type="ordered locus">MUL_3954</name>
</gene>
<proteinExistence type="inferred from homology"/>
<evidence type="ECO:0000255" key="1">
    <source>
        <dbReference type="HAMAP-Rule" id="MF_01347"/>
    </source>
</evidence>
<feature type="chain" id="PRO_1000055137" description="ATP synthase subunit beta">
    <location>
        <begin position="1"/>
        <end position="483"/>
    </location>
</feature>
<feature type="binding site" evidence="1">
    <location>
        <begin position="168"/>
        <end position="175"/>
    </location>
    <ligand>
        <name>ATP</name>
        <dbReference type="ChEBI" id="CHEBI:30616"/>
    </ligand>
</feature>
<sequence>MTVTAEKTDKSASSETSGRVVRVTGPVVDVEFPRGSVPELFNALHAKIDFGSLAKTLTLEVAQHLGDSLVRTISLQPTDGLVRGTEVTDTGRPISVPVGESVKGHVFNALGDCLDEPGYGEDFEHWSIHRKPPAFEDLEPRTEMLETGLKVVDLLTPYVRGGKIALFGGAGVGKTVLIQEMINRIARNFGGTSVFAGVGERTREGNDLWVELQEANVLKDTALVFGQMDEPPGTRMRVALSALTMAEWFRDEAGQDVLLFIDNIFRFTQAGSEVSTLLGRMPSAVGYQPTLADEMGELQERITSTRGRSITSMQAVYVPADDYTDPAPATTFAHLDATTELSRAVFSKGIFPAVDPLASSSTILDPGVVGDEHYRVAQEVIRILQRYKDLQDIIAILGIDELSEEDKQLVNRARRIERFLSQNMMAAEQFTGQPGSTVPVKETIEAFDRLCKGEFDHVPEQAFFLIGGLDDLAKKAESLGAKL</sequence>
<reference key="1">
    <citation type="journal article" date="2007" name="Genome Res.">
        <title>Reductive evolution and niche adaptation inferred from the genome of Mycobacterium ulcerans, the causative agent of Buruli ulcer.</title>
        <authorList>
            <person name="Stinear T.P."/>
            <person name="Seemann T."/>
            <person name="Pidot S."/>
            <person name="Frigui W."/>
            <person name="Reysset G."/>
            <person name="Garnier T."/>
            <person name="Meurice G."/>
            <person name="Simon D."/>
            <person name="Bouchier C."/>
            <person name="Ma L."/>
            <person name="Tichit M."/>
            <person name="Porter J.L."/>
            <person name="Ryan J."/>
            <person name="Johnson P.D.R."/>
            <person name="Davies J.K."/>
            <person name="Jenkin G.A."/>
            <person name="Small P.L.C."/>
            <person name="Jones L.M."/>
            <person name="Tekaia F."/>
            <person name="Laval F."/>
            <person name="Daffe M."/>
            <person name="Parkhill J."/>
            <person name="Cole S.T."/>
        </authorList>
    </citation>
    <scope>NUCLEOTIDE SEQUENCE [LARGE SCALE GENOMIC DNA]</scope>
    <source>
        <strain>Agy99</strain>
    </source>
</reference>
<accession>A0PUK0</accession>
<keyword id="KW-0066">ATP synthesis</keyword>
<keyword id="KW-0067">ATP-binding</keyword>
<keyword id="KW-1003">Cell membrane</keyword>
<keyword id="KW-0139">CF(1)</keyword>
<keyword id="KW-0375">Hydrogen ion transport</keyword>
<keyword id="KW-0406">Ion transport</keyword>
<keyword id="KW-0472">Membrane</keyword>
<keyword id="KW-0547">Nucleotide-binding</keyword>
<keyword id="KW-1278">Translocase</keyword>
<keyword id="KW-0813">Transport</keyword>